<dbReference type="EC" id="3.5.4.5" evidence="1"/>
<dbReference type="EMBL" id="CP000826">
    <property type="protein sequence ID" value="ABV40672.1"/>
    <property type="molecule type" value="Genomic_DNA"/>
</dbReference>
<dbReference type="SMR" id="A8GC32"/>
<dbReference type="STRING" id="399741.Spro_1568"/>
<dbReference type="KEGG" id="spe:Spro_1568"/>
<dbReference type="eggNOG" id="COG0295">
    <property type="taxonomic scope" value="Bacteria"/>
</dbReference>
<dbReference type="HOGENOM" id="CLU_052424_0_0_6"/>
<dbReference type="OrthoDB" id="9795347at2"/>
<dbReference type="GO" id="GO:0005829">
    <property type="term" value="C:cytosol"/>
    <property type="evidence" value="ECO:0007669"/>
    <property type="project" value="TreeGrafter"/>
</dbReference>
<dbReference type="GO" id="GO:0004126">
    <property type="term" value="F:cytidine deaminase activity"/>
    <property type="evidence" value="ECO:0007669"/>
    <property type="project" value="UniProtKB-UniRule"/>
</dbReference>
<dbReference type="GO" id="GO:0042802">
    <property type="term" value="F:identical protein binding"/>
    <property type="evidence" value="ECO:0007669"/>
    <property type="project" value="UniProtKB-ARBA"/>
</dbReference>
<dbReference type="GO" id="GO:0008270">
    <property type="term" value="F:zinc ion binding"/>
    <property type="evidence" value="ECO:0007669"/>
    <property type="project" value="UniProtKB-UniRule"/>
</dbReference>
<dbReference type="GO" id="GO:0009972">
    <property type="term" value="P:cytidine deamination"/>
    <property type="evidence" value="ECO:0007669"/>
    <property type="project" value="InterPro"/>
</dbReference>
<dbReference type="CDD" id="cd01283">
    <property type="entry name" value="cytidine_deaminase"/>
    <property type="match status" value="2"/>
</dbReference>
<dbReference type="FunFam" id="3.40.140.10:FF:000006">
    <property type="entry name" value="Cytidine deaminase"/>
    <property type="match status" value="1"/>
</dbReference>
<dbReference type="FunFam" id="3.40.140.10:FF:000007">
    <property type="entry name" value="Cytidine deaminase"/>
    <property type="match status" value="1"/>
</dbReference>
<dbReference type="Gene3D" id="3.40.140.10">
    <property type="entry name" value="Cytidine Deaminase, domain 2"/>
    <property type="match status" value="2"/>
</dbReference>
<dbReference type="HAMAP" id="MF_01558">
    <property type="entry name" value="Cyt_deam"/>
    <property type="match status" value="1"/>
</dbReference>
<dbReference type="InterPro" id="IPR016192">
    <property type="entry name" value="APOBEC/CMP_deaminase_Zn-bd"/>
</dbReference>
<dbReference type="InterPro" id="IPR002125">
    <property type="entry name" value="CMP_dCMP_dom"/>
</dbReference>
<dbReference type="InterPro" id="IPR013171">
    <property type="entry name" value="Cyd/dCyd_deaminase_Zn-bd"/>
</dbReference>
<dbReference type="InterPro" id="IPR050202">
    <property type="entry name" value="Cyt/Deoxycyt_deaminase"/>
</dbReference>
<dbReference type="InterPro" id="IPR006263">
    <property type="entry name" value="Cyt_deam_dimer"/>
</dbReference>
<dbReference type="InterPro" id="IPR016193">
    <property type="entry name" value="Cytidine_deaminase-like"/>
</dbReference>
<dbReference type="InterPro" id="IPR020797">
    <property type="entry name" value="Cytidine_deaminase_bacteria"/>
</dbReference>
<dbReference type="NCBIfam" id="TIGR01355">
    <property type="entry name" value="cyt_deam_dimer"/>
    <property type="match status" value="1"/>
</dbReference>
<dbReference type="NCBIfam" id="NF006537">
    <property type="entry name" value="PRK09027.1"/>
    <property type="match status" value="1"/>
</dbReference>
<dbReference type="PANTHER" id="PTHR11644">
    <property type="entry name" value="CYTIDINE DEAMINASE"/>
    <property type="match status" value="1"/>
</dbReference>
<dbReference type="PANTHER" id="PTHR11644:SF2">
    <property type="entry name" value="CYTIDINE DEAMINASE"/>
    <property type="match status" value="1"/>
</dbReference>
<dbReference type="Pfam" id="PF00383">
    <property type="entry name" value="dCMP_cyt_deam_1"/>
    <property type="match status" value="1"/>
</dbReference>
<dbReference type="Pfam" id="PF08211">
    <property type="entry name" value="dCMP_cyt_deam_2"/>
    <property type="match status" value="1"/>
</dbReference>
<dbReference type="PIRSF" id="PIRSF006334">
    <property type="entry name" value="Cdd_plus_pseudo"/>
    <property type="match status" value="1"/>
</dbReference>
<dbReference type="SUPFAM" id="SSF53927">
    <property type="entry name" value="Cytidine deaminase-like"/>
    <property type="match status" value="2"/>
</dbReference>
<dbReference type="PROSITE" id="PS00903">
    <property type="entry name" value="CYT_DCMP_DEAMINASES_1"/>
    <property type="match status" value="1"/>
</dbReference>
<dbReference type="PROSITE" id="PS51747">
    <property type="entry name" value="CYT_DCMP_DEAMINASES_2"/>
    <property type="match status" value="2"/>
</dbReference>
<feature type="chain" id="PRO_1000068958" description="Cytidine deaminase">
    <location>
        <begin position="1"/>
        <end position="294"/>
    </location>
</feature>
<feature type="domain" description="CMP/dCMP-type deaminase 1" evidence="2">
    <location>
        <begin position="48"/>
        <end position="168"/>
    </location>
</feature>
<feature type="domain" description="CMP/dCMP-type deaminase 2" evidence="2">
    <location>
        <begin position="187"/>
        <end position="294"/>
    </location>
</feature>
<feature type="active site" description="Proton donor" evidence="1">
    <location>
        <position position="104"/>
    </location>
</feature>
<feature type="binding site" evidence="1">
    <location>
        <begin position="89"/>
        <end position="91"/>
    </location>
    <ligand>
        <name>substrate</name>
    </ligand>
</feature>
<feature type="binding site" evidence="1">
    <location>
        <position position="102"/>
    </location>
    <ligand>
        <name>Zn(2+)</name>
        <dbReference type="ChEBI" id="CHEBI:29105"/>
        <note>catalytic</note>
    </ligand>
</feature>
<feature type="binding site" evidence="1">
    <location>
        <position position="129"/>
    </location>
    <ligand>
        <name>Zn(2+)</name>
        <dbReference type="ChEBI" id="CHEBI:29105"/>
        <note>catalytic</note>
    </ligand>
</feature>
<feature type="binding site" evidence="1">
    <location>
        <position position="132"/>
    </location>
    <ligand>
        <name>Zn(2+)</name>
        <dbReference type="ChEBI" id="CHEBI:29105"/>
        <note>catalytic</note>
    </ligand>
</feature>
<proteinExistence type="inferred from homology"/>
<name>CDD_SERP5</name>
<protein>
    <recommendedName>
        <fullName evidence="1">Cytidine deaminase</fullName>
        <ecNumber evidence="1">3.5.4.5</ecNumber>
    </recommendedName>
    <alternativeName>
        <fullName evidence="1">Cytidine aminohydrolase</fullName>
        <shortName evidence="1">CDA</shortName>
    </alternativeName>
</protein>
<sequence length="294" mass="31458">MHPRFQTAFGELPATLQSALQSYIDAPDFPAMLKAEQVDAITQRCGLDDDALAFALLPLAAACSLAPISQFYVGAIARGQSGNLYFGANMEFSGAPMQQTIHAEQCAVTHAWLRGEPALASITVNYTPCGHCRQFMNELNSGVSLKIRLPGREPATLGDYLPDSFGPKDLDITTLLMDQVDHGFQLALTDELEKAALAAANQSHAPYSNAHSGVALEAEDGTVYTGRYAENAAFNPSLPPLQAALILMNVSGDDCQKVKRAVLAEPESAILTQWDATRATLAALGCQNVSRITF</sequence>
<gene>
    <name evidence="1" type="primary">cdd</name>
    <name type="ordered locus">Spro_1568</name>
</gene>
<keyword id="KW-0378">Hydrolase</keyword>
<keyword id="KW-0479">Metal-binding</keyword>
<keyword id="KW-0862">Zinc</keyword>
<reference key="1">
    <citation type="submission" date="2007-09" db="EMBL/GenBank/DDBJ databases">
        <title>Complete sequence of chromosome of Serratia proteamaculans 568.</title>
        <authorList>
            <consortium name="US DOE Joint Genome Institute"/>
            <person name="Copeland A."/>
            <person name="Lucas S."/>
            <person name="Lapidus A."/>
            <person name="Barry K."/>
            <person name="Glavina del Rio T."/>
            <person name="Dalin E."/>
            <person name="Tice H."/>
            <person name="Pitluck S."/>
            <person name="Chain P."/>
            <person name="Malfatti S."/>
            <person name="Shin M."/>
            <person name="Vergez L."/>
            <person name="Schmutz J."/>
            <person name="Larimer F."/>
            <person name="Land M."/>
            <person name="Hauser L."/>
            <person name="Kyrpides N."/>
            <person name="Kim E."/>
            <person name="Taghavi S."/>
            <person name="Newman L."/>
            <person name="Vangronsveld J."/>
            <person name="van der Lelie D."/>
            <person name="Richardson P."/>
        </authorList>
    </citation>
    <scope>NUCLEOTIDE SEQUENCE [LARGE SCALE GENOMIC DNA]</scope>
    <source>
        <strain>568</strain>
    </source>
</reference>
<comment type="function">
    <text evidence="1">This enzyme scavenges exogenous and endogenous cytidine and 2'-deoxycytidine for UMP synthesis.</text>
</comment>
<comment type="catalytic activity">
    <reaction evidence="1">
        <text>cytidine + H2O + H(+) = uridine + NH4(+)</text>
        <dbReference type="Rhea" id="RHEA:16069"/>
        <dbReference type="ChEBI" id="CHEBI:15377"/>
        <dbReference type="ChEBI" id="CHEBI:15378"/>
        <dbReference type="ChEBI" id="CHEBI:16704"/>
        <dbReference type="ChEBI" id="CHEBI:17562"/>
        <dbReference type="ChEBI" id="CHEBI:28938"/>
        <dbReference type="EC" id="3.5.4.5"/>
    </reaction>
</comment>
<comment type="catalytic activity">
    <reaction evidence="1">
        <text>2'-deoxycytidine + H2O + H(+) = 2'-deoxyuridine + NH4(+)</text>
        <dbReference type="Rhea" id="RHEA:13433"/>
        <dbReference type="ChEBI" id="CHEBI:15377"/>
        <dbReference type="ChEBI" id="CHEBI:15378"/>
        <dbReference type="ChEBI" id="CHEBI:15698"/>
        <dbReference type="ChEBI" id="CHEBI:16450"/>
        <dbReference type="ChEBI" id="CHEBI:28938"/>
        <dbReference type="EC" id="3.5.4.5"/>
    </reaction>
</comment>
<comment type="cofactor">
    <cofactor evidence="1">
        <name>Zn(2+)</name>
        <dbReference type="ChEBI" id="CHEBI:29105"/>
    </cofactor>
    <text evidence="1">Binds 1 zinc ion.</text>
</comment>
<comment type="subunit">
    <text evidence="1">Homodimer.</text>
</comment>
<comment type="similarity">
    <text evidence="1">Belongs to the cytidine and deoxycytidylate deaminase family.</text>
</comment>
<organism>
    <name type="scientific">Serratia proteamaculans (strain 568)</name>
    <dbReference type="NCBI Taxonomy" id="399741"/>
    <lineage>
        <taxon>Bacteria</taxon>
        <taxon>Pseudomonadati</taxon>
        <taxon>Pseudomonadota</taxon>
        <taxon>Gammaproteobacteria</taxon>
        <taxon>Enterobacterales</taxon>
        <taxon>Yersiniaceae</taxon>
        <taxon>Serratia</taxon>
    </lineage>
</organism>
<accession>A8GC32</accession>
<evidence type="ECO:0000255" key="1">
    <source>
        <dbReference type="HAMAP-Rule" id="MF_01558"/>
    </source>
</evidence>
<evidence type="ECO:0000255" key="2">
    <source>
        <dbReference type="PROSITE-ProRule" id="PRU01083"/>
    </source>
</evidence>